<evidence type="ECO:0000250" key="1">
    <source>
        <dbReference type="UniProtKB" id="P06727"/>
    </source>
</evidence>
<evidence type="ECO:0000256" key="2">
    <source>
        <dbReference type="SAM" id="MobiDB-lite"/>
    </source>
</evidence>
<evidence type="ECO:0000305" key="3"/>
<evidence type="ECO:0007744" key="4">
    <source>
    </source>
</evidence>
<keyword id="KW-0162">Chylomicron</keyword>
<keyword id="KW-0345">HDL</keyword>
<keyword id="KW-0445">Lipid transport</keyword>
<keyword id="KW-0597">Phosphoprotein</keyword>
<keyword id="KW-1185">Reference proteome</keyword>
<keyword id="KW-0677">Repeat</keyword>
<keyword id="KW-0964">Secreted</keyword>
<keyword id="KW-0732">Signal</keyword>
<keyword id="KW-0813">Transport</keyword>
<feature type="signal peptide">
    <location>
        <begin position="1"/>
        <end position="20"/>
    </location>
</feature>
<feature type="chain" id="PRO_0000001980" description="Apolipoprotein A-IV">
    <location>
        <begin position="21"/>
        <end position="391"/>
    </location>
</feature>
<feature type="repeat" description="1">
    <location>
        <begin position="33"/>
        <end position="54"/>
    </location>
</feature>
<feature type="repeat" description="2">
    <location>
        <begin position="60"/>
        <end position="81"/>
    </location>
</feature>
<feature type="repeat" description="3">
    <location>
        <begin position="82"/>
        <end position="103"/>
    </location>
</feature>
<feature type="repeat" description="4">
    <location>
        <begin position="115"/>
        <end position="136"/>
    </location>
</feature>
<feature type="repeat" description="5">
    <location>
        <begin position="137"/>
        <end position="158"/>
    </location>
</feature>
<feature type="repeat" description="6">
    <location>
        <begin position="159"/>
        <end position="180"/>
    </location>
</feature>
<feature type="repeat" description="7">
    <location>
        <begin position="181"/>
        <end position="202"/>
    </location>
</feature>
<feature type="repeat" description="8">
    <location>
        <begin position="203"/>
        <end position="224"/>
    </location>
</feature>
<feature type="repeat" description="9">
    <location>
        <begin position="225"/>
        <end position="246"/>
    </location>
</feature>
<feature type="repeat" description="10">
    <location>
        <begin position="247"/>
        <end position="268"/>
    </location>
</feature>
<feature type="repeat" description="11">
    <location>
        <begin position="269"/>
        <end position="286"/>
    </location>
</feature>
<feature type="repeat" description="12">
    <location>
        <begin position="287"/>
        <end position="308"/>
    </location>
</feature>
<feature type="repeat" description="13">
    <location>
        <begin position="309"/>
        <end position="330"/>
    </location>
</feature>
<feature type="region of interest" description="13 X 22 AA approximate tandem repeats">
    <location>
        <begin position="33"/>
        <end position="330"/>
    </location>
</feature>
<feature type="region of interest" description="Disordered" evidence="2">
    <location>
        <begin position="354"/>
        <end position="391"/>
    </location>
</feature>
<feature type="compositionally biased region" description="Low complexity" evidence="2">
    <location>
        <begin position="371"/>
        <end position="391"/>
    </location>
</feature>
<feature type="modified residue" description="Phosphoserine" evidence="4">
    <location>
        <position position="333"/>
    </location>
</feature>
<feature type="sequence variant">
    <original>Q</original>
    <variation>H</variation>
    <location>
        <position position="253"/>
    </location>
</feature>
<reference key="1">
    <citation type="journal article" date="1986" name="J. Biol. Chem.">
        <title>Evolution of the apolipoproteins. Structure of the rat apo-A-IV gene and its relationship to the human genes for apo-A-I, C-III, and E.</title>
        <authorList>
            <person name="Boguski M.S."/>
            <person name="Birkenmeier E.H."/>
            <person name="Elshourbagy N.A."/>
            <person name="Taylor J.M."/>
            <person name="Gordon J.I."/>
        </authorList>
    </citation>
    <scope>NUCLEOTIDE SEQUENCE [GENOMIC DNA]</scope>
</reference>
<reference key="2">
    <citation type="journal article" date="1984" name="Proc. Natl. Acad. Sci. U.S.A.">
        <title>Rat apolipoprotein A-IV contains 13 tandem repetitions of a 22-amino acid segment with amphipathic helical potential.</title>
        <authorList>
            <person name="Boguski M.S."/>
            <person name="Elshourbagy N.A."/>
            <person name="Taylor J.M."/>
            <person name="Gordon J.I."/>
        </authorList>
    </citation>
    <scope>NUCLEOTIDE SEQUENCE [MRNA]</scope>
</reference>
<reference key="3">
    <citation type="journal article" date="1986" name="J. Biol. Chem.">
        <title>Linkage, evolution, and expression of the rat apolipoprotein A-I, C-III, and A-IV genes.</title>
        <authorList>
            <person name="Haddad I.A."/>
            <person name="Ordovas J.M."/>
            <person name="Fitzpatrick T."/>
            <person name="Karathanasis S.K."/>
        </authorList>
    </citation>
    <scope>NUCLEOTIDE SEQUENCE [GENOMIC DNA]</scope>
</reference>
<reference key="4">
    <citation type="journal article" date="2004" name="Genome Res.">
        <title>The status, quality, and expansion of the NIH full-length cDNA project: the Mammalian Gene Collection (MGC).</title>
        <authorList>
            <consortium name="The MGC Project Team"/>
        </authorList>
    </citation>
    <scope>NUCLEOTIDE SEQUENCE [LARGE SCALE MRNA]</scope>
    <source>
        <tissue>Liver</tissue>
    </source>
</reference>
<reference key="5">
    <citation type="journal article" date="2012" name="Nat. Commun.">
        <title>Quantitative maps of protein phosphorylation sites across 14 different rat organs and tissues.</title>
        <authorList>
            <person name="Lundby A."/>
            <person name="Secher A."/>
            <person name="Lage K."/>
            <person name="Nordsborg N.B."/>
            <person name="Dmytriyev A."/>
            <person name="Lundby C."/>
            <person name="Olsen J.V."/>
        </authorList>
    </citation>
    <scope>PHOSPHORYLATION [LARGE SCALE ANALYSIS] AT SER-333</scope>
    <scope>IDENTIFICATION BY MASS SPECTROMETRY [LARGE SCALE ANALYSIS]</scope>
</reference>
<organism>
    <name type="scientific">Rattus norvegicus</name>
    <name type="common">Rat</name>
    <dbReference type="NCBI Taxonomy" id="10116"/>
    <lineage>
        <taxon>Eukaryota</taxon>
        <taxon>Metazoa</taxon>
        <taxon>Chordata</taxon>
        <taxon>Craniata</taxon>
        <taxon>Vertebrata</taxon>
        <taxon>Euteleostomi</taxon>
        <taxon>Mammalia</taxon>
        <taxon>Eutheria</taxon>
        <taxon>Euarchontoglires</taxon>
        <taxon>Glires</taxon>
        <taxon>Rodentia</taxon>
        <taxon>Myomorpha</taxon>
        <taxon>Muroidea</taxon>
        <taxon>Muridae</taxon>
        <taxon>Murinae</taxon>
        <taxon>Rattus</taxon>
    </lineage>
</organism>
<comment type="function">
    <text>May have a role in chylomicrons and VLDL secretion and catabolism. Required for efficient activation of lipoprotein lipase by ApoC-II; potent activator of LCAT. Apoa-IV is a major component of HDL and chylomicrons.</text>
</comment>
<comment type="subunit">
    <text evidence="1">Homodimer.</text>
</comment>
<comment type="subcellular location">
    <subcellularLocation>
        <location>Secreted</location>
    </subcellularLocation>
</comment>
<comment type="tissue specificity">
    <text>Secreted in plasma.</text>
</comment>
<comment type="domain">
    <text>Nine of the thirteen 22-amino acid tandem repeats (each 22-mer is actually a tandem array of two, A and B, related 11-mers) occurring in this sequence are predicted to be highly alpha-helical, and many of these helices are amphipathic. They may therefore serve as lipid-binding domains with lecithin:cholesterol acyltransferase (LCAT) activating abilities.</text>
</comment>
<comment type="similarity">
    <text evidence="3">Belongs to the apolipoprotein A1/A4/E family.</text>
</comment>
<name>APOA4_RAT</name>
<protein>
    <recommendedName>
        <fullName>Apolipoprotein A-IV</fullName>
        <shortName>Apo-AIV</shortName>
        <shortName>ApoA-IV</shortName>
    </recommendedName>
    <alternativeName>
        <fullName>Apolipoprotein A4</fullName>
    </alternativeName>
</protein>
<gene>
    <name type="primary">Apoa4</name>
</gene>
<proteinExistence type="evidence at protein level"/>
<dbReference type="EMBL" id="M00002">
    <property type="protein sequence ID" value="AAA85909.1"/>
    <property type="molecule type" value="mRNA"/>
</dbReference>
<dbReference type="EMBL" id="J02588">
    <property type="protein sequence ID" value="AAA40747.1"/>
    <property type="molecule type" value="Genomic_DNA"/>
</dbReference>
<dbReference type="EMBL" id="M13508">
    <property type="protein sequence ID" value="AAA40748.1"/>
    <property type="molecule type" value="Genomic_DNA"/>
</dbReference>
<dbReference type="EMBL" id="BC091159">
    <property type="protein sequence ID" value="AAH91159.1"/>
    <property type="molecule type" value="mRNA"/>
</dbReference>
<dbReference type="PIR" id="A03095">
    <property type="entry name" value="LPRTA4"/>
</dbReference>
<dbReference type="RefSeq" id="NP_036869.2">
    <property type="nucleotide sequence ID" value="NM_012737.2"/>
</dbReference>
<dbReference type="SMR" id="P02651"/>
<dbReference type="FunCoup" id="P02651">
    <property type="interactions" value="115"/>
</dbReference>
<dbReference type="IntAct" id="P02651">
    <property type="interactions" value="2"/>
</dbReference>
<dbReference type="STRING" id="10116.ENSRNOP00000069659"/>
<dbReference type="iPTMnet" id="P02651"/>
<dbReference type="PhosphoSitePlus" id="P02651"/>
<dbReference type="Ensembl" id="ENSRNOT00000080658.2">
    <property type="protein sequence ID" value="ENSRNOP00000069659.2"/>
    <property type="gene ID" value="ENSRNOG00000055909.2"/>
</dbReference>
<dbReference type="GeneID" id="25080"/>
<dbReference type="KEGG" id="rno:25080"/>
<dbReference type="UCSC" id="RGD:2132">
    <property type="organism name" value="rat"/>
</dbReference>
<dbReference type="AGR" id="RGD:2132"/>
<dbReference type="CTD" id="337"/>
<dbReference type="RGD" id="2132">
    <property type="gene designation" value="Apoa4"/>
</dbReference>
<dbReference type="GeneTree" id="ENSGT00950000182929"/>
<dbReference type="InParanoid" id="P02651"/>
<dbReference type="OMA" id="QAKMSPY"/>
<dbReference type="OrthoDB" id="9886755at2759"/>
<dbReference type="PhylomeDB" id="P02651"/>
<dbReference type="Reactome" id="R-RNO-8963888">
    <property type="pathway name" value="Chylomicron assembly"/>
</dbReference>
<dbReference type="Reactome" id="R-RNO-8963901">
    <property type="pathway name" value="Chylomicron remodeling"/>
</dbReference>
<dbReference type="Reactome" id="R-RNO-975634">
    <property type="pathway name" value="Retinoid metabolism and transport"/>
</dbReference>
<dbReference type="PRO" id="PR:P02651"/>
<dbReference type="Proteomes" id="UP000002494">
    <property type="component" value="Chromosome 8"/>
</dbReference>
<dbReference type="GO" id="GO:0009986">
    <property type="term" value="C:cell surface"/>
    <property type="evidence" value="ECO:0000266"/>
    <property type="project" value="RGD"/>
</dbReference>
<dbReference type="GO" id="GO:0042627">
    <property type="term" value="C:chylomicron"/>
    <property type="evidence" value="ECO:0000314"/>
    <property type="project" value="RGD"/>
</dbReference>
<dbReference type="GO" id="GO:0005615">
    <property type="term" value="C:extracellular space"/>
    <property type="evidence" value="ECO:0000266"/>
    <property type="project" value="RGD"/>
</dbReference>
<dbReference type="GO" id="GO:1903561">
    <property type="term" value="C:extracellular vesicle"/>
    <property type="evidence" value="ECO:0000318"/>
    <property type="project" value="GO_Central"/>
</dbReference>
<dbReference type="GO" id="GO:0034364">
    <property type="term" value="C:high-density lipoprotein particle"/>
    <property type="evidence" value="ECO:0000266"/>
    <property type="project" value="RGD"/>
</dbReference>
<dbReference type="GO" id="GO:0034362">
    <property type="term" value="C:low-density lipoprotein particle"/>
    <property type="evidence" value="ECO:0000318"/>
    <property type="project" value="GO_Central"/>
</dbReference>
<dbReference type="GO" id="GO:0045202">
    <property type="term" value="C:synapse"/>
    <property type="evidence" value="ECO:0000314"/>
    <property type="project" value="SynGO"/>
</dbReference>
<dbReference type="GO" id="GO:0034361">
    <property type="term" value="C:very-low-density lipoprotein particle"/>
    <property type="evidence" value="ECO:0000266"/>
    <property type="project" value="RGD"/>
</dbReference>
<dbReference type="GO" id="GO:0016209">
    <property type="term" value="F:antioxidant activity"/>
    <property type="evidence" value="ECO:0000266"/>
    <property type="project" value="RGD"/>
</dbReference>
<dbReference type="GO" id="GO:0120020">
    <property type="term" value="F:cholesterol transfer activity"/>
    <property type="evidence" value="ECO:0000266"/>
    <property type="project" value="RGD"/>
</dbReference>
<dbReference type="GO" id="GO:0005507">
    <property type="term" value="F:copper ion binding"/>
    <property type="evidence" value="ECO:0000266"/>
    <property type="project" value="RGD"/>
</dbReference>
<dbReference type="GO" id="GO:0042802">
    <property type="term" value="F:identical protein binding"/>
    <property type="evidence" value="ECO:0000266"/>
    <property type="project" value="RGD"/>
</dbReference>
<dbReference type="GO" id="GO:0008289">
    <property type="term" value="F:lipid binding"/>
    <property type="evidence" value="ECO:0000266"/>
    <property type="project" value="RGD"/>
</dbReference>
<dbReference type="GO" id="GO:0031210">
    <property type="term" value="F:phosphatidylcholine binding"/>
    <property type="evidence" value="ECO:0000266"/>
    <property type="project" value="RGD"/>
</dbReference>
<dbReference type="GO" id="GO:0060228">
    <property type="term" value="F:phosphatidylcholine-sterol O-acyltransferase activator activity"/>
    <property type="evidence" value="ECO:0000266"/>
    <property type="project" value="RGD"/>
</dbReference>
<dbReference type="GO" id="GO:0005543">
    <property type="term" value="F:phospholipid binding"/>
    <property type="evidence" value="ECO:0000318"/>
    <property type="project" value="GO_Central"/>
</dbReference>
<dbReference type="GO" id="GO:0042803">
    <property type="term" value="F:protein homodimerization activity"/>
    <property type="evidence" value="ECO:0000266"/>
    <property type="project" value="RGD"/>
</dbReference>
<dbReference type="GO" id="GO:0055090">
    <property type="term" value="P:acylglycerol homeostasis"/>
    <property type="evidence" value="ECO:0000318"/>
    <property type="project" value="GO_Central"/>
</dbReference>
<dbReference type="GO" id="GO:0033344">
    <property type="term" value="P:cholesterol efflux"/>
    <property type="evidence" value="ECO:0000266"/>
    <property type="project" value="RGD"/>
</dbReference>
<dbReference type="GO" id="GO:0042632">
    <property type="term" value="P:cholesterol homeostasis"/>
    <property type="evidence" value="ECO:0000266"/>
    <property type="project" value="RGD"/>
</dbReference>
<dbReference type="GO" id="GO:0008203">
    <property type="term" value="P:cholesterol metabolic process"/>
    <property type="evidence" value="ECO:0000266"/>
    <property type="project" value="RGD"/>
</dbReference>
<dbReference type="GO" id="GO:0034375">
    <property type="term" value="P:high-density lipoprotein particle remodeling"/>
    <property type="evidence" value="ECO:0000266"/>
    <property type="project" value="RGD"/>
</dbReference>
<dbReference type="GO" id="GO:0042744">
    <property type="term" value="P:hydrogen peroxide catabolic process"/>
    <property type="evidence" value="ECO:0000266"/>
    <property type="project" value="RGD"/>
</dbReference>
<dbReference type="GO" id="GO:0002227">
    <property type="term" value="P:innate immune response in mucosa"/>
    <property type="evidence" value="ECO:0000266"/>
    <property type="project" value="RGD"/>
</dbReference>
<dbReference type="GO" id="GO:0007159">
    <property type="term" value="P:leukocyte cell-cell adhesion"/>
    <property type="evidence" value="ECO:0000266"/>
    <property type="project" value="RGD"/>
</dbReference>
<dbReference type="GO" id="GO:0016042">
    <property type="term" value="P:lipid catabolic process"/>
    <property type="evidence" value="ECO:0000266"/>
    <property type="project" value="RGD"/>
</dbReference>
<dbReference type="GO" id="GO:0055088">
    <property type="term" value="P:lipid homeostasis"/>
    <property type="evidence" value="ECO:0000266"/>
    <property type="project" value="RGD"/>
</dbReference>
<dbReference type="GO" id="GO:0006869">
    <property type="term" value="P:lipid transport"/>
    <property type="evidence" value="ECO:0000266"/>
    <property type="project" value="RGD"/>
</dbReference>
<dbReference type="GO" id="GO:0042157">
    <property type="term" value="P:lipoprotein metabolic process"/>
    <property type="evidence" value="ECO:0007669"/>
    <property type="project" value="InterPro"/>
</dbReference>
<dbReference type="GO" id="GO:0034445">
    <property type="term" value="P:negative regulation of plasma lipoprotein oxidation"/>
    <property type="evidence" value="ECO:0000266"/>
    <property type="project" value="RGD"/>
</dbReference>
<dbReference type="GO" id="GO:0014012">
    <property type="term" value="P:peripheral nervous system axon regeneration"/>
    <property type="evidence" value="ECO:0000270"/>
    <property type="project" value="RGD"/>
</dbReference>
<dbReference type="GO" id="GO:0046470">
    <property type="term" value="P:phosphatidylcholine metabolic process"/>
    <property type="evidence" value="ECO:0000266"/>
    <property type="project" value="RGD"/>
</dbReference>
<dbReference type="GO" id="GO:0033700">
    <property type="term" value="P:phospholipid efflux"/>
    <property type="evidence" value="ECO:0000266"/>
    <property type="project" value="RGD"/>
</dbReference>
<dbReference type="GO" id="GO:0045723">
    <property type="term" value="P:positive regulation of fatty acid biosynthetic process"/>
    <property type="evidence" value="ECO:0000266"/>
    <property type="project" value="RGD"/>
</dbReference>
<dbReference type="GO" id="GO:0010898">
    <property type="term" value="P:positive regulation of triglyceride catabolic process"/>
    <property type="evidence" value="ECO:0000266"/>
    <property type="project" value="RGD"/>
</dbReference>
<dbReference type="GO" id="GO:0065005">
    <property type="term" value="P:protein-lipid complex assembly"/>
    <property type="evidence" value="ECO:0000266"/>
    <property type="project" value="RGD"/>
</dbReference>
<dbReference type="GO" id="GO:0032374">
    <property type="term" value="P:regulation of cholesterol transport"/>
    <property type="evidence" value="ECO:0000266"/>
    <property type="project" value="RGD"/>
</dbReference>
<dbReference type="GO" id="GO:0030300">
    <property type="term" value="P:regulation of intestinal cholesterol absorption"/>
    <property type="evidence" value="ECO:0000266"/>
    <property type="project" value="RGD"/>
</dbReference>
<dbReference type="GO" id="GO:0019430">
    <property type="term" value="P:removal of superoxide radicals"/>
    <property type="evidence" value="ECO:0000266"/>
    <property type="project" value="RGD"/>
</dbReference>
<dbReference type="GO" id="GO:0032094">
    <property type="term" value="P:response to food"/>
    <property type="evidence" value="ECO:0000304"/>
    <property type="project" value="RGD"/>
</dbReference>
<dbReference type="GO" id="GO:0006982">
    <property type="term" value="P:response to lipid hydroperoxide"/>
    <property type="evidence" value="ECO:0000266"/>
    <property type="project" value="RGD"/>
</dbReference>
<dbReference type="GO" id="GO:0035634">
    <property type="term" value="P:response to stilbenoid"/>
    <property type="evidence" value="ECO:0000266"/>
    <property type="project" value="RGD"/>
</dbReference>
<dbReference type="GO" id="GO:0034014">
    <property type="term" value="P:response to triglyceride"/>
    <property type="evidence" value="ECO:0000270"/>
    <property type="project" value="RGD"/>
</dbReference>
<dbReference type="GO" id="GO:0043691">
    <property type="term" value="P:reverse cholesterol transport"/>
    <property type="evidence" value="ECO:0000266"/>
    <property type="project" value="RGD"/>
</dbReference>
<dbReference type="GO" id="GO:0034372">
    <property type="term" value="P:very-low-density lipoprotein particle remodeling"/>
    <property type="evidence" value="ECO:0000266"/>
    <property type="project" value="RGD"/>
</dbReference>
<dbReference type="FunFam" id="1.20.120.20:FF:000004">
    <property type="entry name" value="Apolipoprotein A-IV"/>
    <property type="match status" value="1"/>
</dbReference>
<dbReference type="FunFam" id="1.20.120.20:FF:000005">
    <property type="entry name" value="Apolipoprotein A-IV"/>
    <property type="match status" value="1"/>
</dbReference>
<dbReference type="Gene3D" id="1.20.120.20">
    <property type="entry name" value="Apolipoprotein"/>
    <property type="match status" value="2"/>
</dbReference>
<dbReference type="InterPro" id="IPR000074">
    <property type="entry name" value="ApoA_E"/>
</dbReference>
<dbReference type="InterPro" id="IPR050163">
    <property type="entry name" value="Apolipoprotein_A1/A4/E"/>
</dbReference>
<dbReference type="PANTHER" id="PTHR18976">
    <property type="entry name" value="APOLIPOPROTEIN"/>
    <property type="match status" value="1"/>
</dbReference>
<dbReference type="PANTHER" id="PTHR18976:SF1">
    <property type="entry name" value="APOLIPOPROTEIN A-IV"/>
    <property type="match status" value="1"/>
</dbReference>
<dbReference type="Pfam" id="PF01442">
    <property type="entry name" value="Apolipoprotein"/>
    <property type="match status" value="2"/>
</dbReference>
<dbReference type="SUPFAM" id="SSF58113">
    <property type="entry name" value="Apolipoprotein A-I"/>
    <property type="match status" value="1"/>
</dbReference>
<sequence length="391" mass="44456">MFLKAVVLTVALVAITGTQAEVTSDQVANVMWDYFTQLSNNAKEAVEQLQKTDVTQQLNTLFQDKLGNINTYADDLQNKLVPFAVQLSGHLTKETERVREEIQKELEDLRANMMPHANKVSQMFGDNVQKLQEHLRPYATDLQAQINAQTQDMKRQLTPYIQRMQTTIQDNVENLQSSMVPFANELKEKFNQNMEGLKGQLTPRANELKATIDQNLEDLRSRLAPLAEGVQEKLNHQMEGLAFQMKKNAEELQTKVSTNIDQLQKNLAPLVEDVQSKLKGNTEGLQKSLEDLNKQLDQQVEVFRRAVEPLGDKFNMALVQQMEKFRQQLGSDSGDVESHLSFLEKNLREKVSSFMSTLQKKGSPDQPLALPLPEQVQEQVQEQVQPKPLES</sequence>
<accession>P02651</accession>
<accession>Q5BK92</accession>